<feature type="initiator methionine" description="Removed" evidence="1">
    <location>
        <position position="1"/>
    </location>
</feature>
<feature type="chain" id="PRO_0000207000" description="Exodeoxyribonuclease 7 small subunit">
    <location>
        <begin position="2"/>
        <end position="80"/>
    </location>
</feature>
<protein>
    <recommendedName>
        <fullName evidence="2">Exodeoxyribonuclease 7 small subunit</fullName>
        <ecNumber evidence="2">3.1.11.6</ecNumber>
    </recommendedName>
    <alternativeName>
        <fullName evidence="2">Exodeoxyribonuclease VII small subunit</fullName>
        <shortName evidence="2">Exonuclease VII small subunit</shortName>
    </alternativeName>
</protein>
<keyword id="KW-0963">Cytoplasm</keyword>
<keyword id="KW-0269">Exonuclease</keyword>
<keyword id="KW-0378">Hydrolase</keyword>
<keyword id="KW-0540">Nuclease</keyword>
<keyword id="KW-1185">Reference proteome</keyword>
<gene>
    <name evidence="2" type="primary">xseB</name>
    <name type="ordered locus">STM0424</name>
</gene>
<organism>
    <name type="scientific">Salmonella typhimurium (strain LT2 / SGSC1412 / ATCC 700720)</name>
    <dbReference type="NCBI Taxonomy" id="99287"/>
    <lineage>
        <taxon>Bacteria</taxon>
        <taxon>Pseudomonadati</taxon>
        <taxon>Pseudomonadota</taxon>
        <taxon>Gammaproteobacteria</taxon>
        <taxon>Enterobacterales</taxon>
        <taxon>Enterobacteriaceae</taxon>
        <taxon>Salmonella</taxon>
    </lineage>
</organism>
<comment type="function">
    <text evidence="2">Bidirectionally degrades single-stranded DNA into large acid-insoluble oligonucleotides, which are then degraded further into small acid-soluble oligonucleotides.</text>
</comment>
<comment type="catalytic activity">
    <reaction evidence="2">
        <text>Exonucleolytic cleavage in either 5'- to 3'- or 3'- to 5'-direction to yield nucleoside 5'-phosphates.</text>
        <dbReference type="EC" id="3.1.11.6"/>
    </reaction>
</comment>
<comment type="subunit">
    <text evidence="2">Heterooligomer composed of large and small subunits.</text>
</comment>
<comment type="subcellular location">
    <subcellularLocation>
        <location evidence="2">Cytoplasm</location>
    </subcellularLocation>
</comment>
<comment type="similarity">
    <text evidence="2">Belongs to the XseB family.</text>
</comment>
<proteinExistence type="inferred from homology"/>
<accession>P67458</accession>
<accession>Q8XEZ9</accession>
<sequence>MPKKNEAPASFETALSELEHIVTRLESGDLPLEDALNEFERGVQLARQGQAKLQQAEQRVQILLSDNEEASPEPFIADNE</sequence>
<reference key="1">
    <citation type="journal article" date="2001" name="Nature">
        <title>Complete genome sequence of Salmonella enterica serovar Typhimurium LT2.</title>
        <authorList>
            <person name="McClelland M."/>
            <person name="Sanderson K.E."/>
            <person name="Spieth J."/>
            <person name="Clifton S.W."/>
            <person name="Latreille P."/>
            <person name="Courtney L."/>
            <person name="Porwollik S."/>
            <person name="Ali J."/>
            <person name="Dante M."/>
            <person name="Du F."/>
            <person name="Hou S."/>
            <person name="Layman D."/>
            <person name="Leonard S."/>
            <person name="Nguyen C."/>
            <person name="Scott K."/>
            <person name="Holmes A."/>
            <person name="Grewal N."/>
            <person name="Mulvaney E."/>
            <person name="Ryan E."/>
            <person name="Sun H."/>
            <person name="Florea L."/>
            <person name="Miller W."/>
            <person name="Stoneking T."/>
            <person name="Nhan M."/>
            <person name="Waterston R."/>
            <person name="Wilson R.K."/>
        </authorList>
    </citation>
    <scope>NUCLEOTIDE SEQUENCE [LARGE SCALE GENOMIC DNA]</scope>
    <source>
        <strain>LT2 / SGSC1412 / ATCC 700720</strain>
    </source>
</reference>
<evidence type="ECO:0000250" key="1"/>
<evidence type="ECO:0000255" key="2">
    <source>
        <dbReference type="HAMAP-Rule" id="MF_00337"/>
    </source>
</evidence>
<dbReference type="EC" id="3.1.11.6" evidence="2"/>
<dbReference type="EMBL" id="AE006468">
    <property type="protein sequence ID" value="AAL19378.1"/>
    <property type="molecule type" value="Genomic_DNA"/>
</dbReference>
<dbReference type="RefSeq" id="NP_459419.1">
    <property type="nucleotide sequence ID" value="NC_003197.2"/>
</dbReference>
<dbReference type="RefSeq" id="WP_001124944.1">
    <property type="nucleotide sequence ID" value="NC_003197.2"/>
</dbReference>
<dbReference type="SMR" id="P67458"/>
<dbReference type="STRING" id="99287.STM0424"/>
<dbReference type="PaxDb" id="99287-STM0424"/>
<dbReference type="DNASU" id="1251943"/>
<dbReference type="GeneID" id="1251943"/>
<dbReference type="KEGG" id="stm:STM0424"/>
<dbReference type="PATRIC" id="fig|99287.12.peg.453"/>
<dbReference type="HOGENOM" id="CLU_145918_3_3_6"/>
<dbReference type="OMA" id="PLNDYKG"/>
<dbReference type="PhylomeDB" id="P67458"/>
<dbReference type="BioCyc" id="SENT99287:STM0424-MONOMER"/>
<dbReference type="Proteomes" id="UP000001014">
    <property type="component" value="Chromosome"/>
</dbReference>
<dbReference type="GO" id="GO:0005829">
    <property type="term" value="C:cytosol"/>
    <property type="evidence" value="ECO:0000318"/>
    <property type="project" value="GO_Central"/>
</dbReference>
<dbReference type="GO" id="GO:0009318">
    <property type="term" value="C:exodeoxyribonuclease VII complex"/>
    <property type="evidence" value="ECO:0007669"/>
    <property type="project" value="InterPro"/>
</dbReference>
<dbReference type="GO" id="GO:0008855">
    <property type="term" value="F:exodeoxyribonuclease VII activity"/>
    <property type="evidence" value="ECO:0000318"/>
    <property type="project" value="GO_Central"/>
</dbReference>
<dbReference type="GO" id="GO:0006308">
    <property type="term" value="P:DNA catabolic process"/>
    <property type="evidence" value="ECO:0007669"/>
    <property type="project" value="UniProtKB-UniRule"/>
</dbReference>
<dbReference type="FunFam" id="1.10.287.1040:FF:000001">
    <property type="entry name" value="Exodeoxyribonuclease 7 small subunit"/>
    <property type="match status" value="1"/>
</dbReference>
<dbReference type="Gene3D" id="1.10.287.1040">
    <property type="entry name" value="Exonuclease VII, small subunit"/>
    <property type="match status" value="1"/>
</dbReference>
<dbReference type="HAMAP" id="MF_00337">
    <property type="entry name" value="Exonuc_7_S"/>
    <property type="match status" value="1"/>
</dbReference>
<dbReference type="InterPro" id="IPR003761">
    <property type="entry name" value="Exonuc_VII_S"/>
</dbReference>
<dbReference type="InterPro" id="IPR037004">
    <property type="entry name" value="Exonuc_VII_ssu_sf"/>
</dbReference>
<dbReference type="NCBIfam" id="NF002137">
    <property type="entry name" value="PRK00977.1-1"/>
    <property type="match status" value="1"/>
</dbReference>
<dbReference type="NCBIfam" id="NF002140">
    <property type="entry name" value="PRK00977.1-4"/>
    <property type="match status" value="1"/>
</dbReference>
<dbReference type="NCBIfam" id="TIGR01280">
    <property type="entry name" value="xseB"/>
    <property type="match status" value="1"/>
</dbReference>
<dbReference type="PANTHER" id="PTHR34137">
    <property type="entry name" value="EXODEOXYRIBONUCLEASE 7 SMALL SUBUNIT"/>
    <property type="match status" value="1"/>
</dbReference>
<dbReference type="PANTHER" id="PTHR34137:SF1">
    <property type="entry name" value="EXODEOXYRIBONUCLEASE 7 SMALL SUBUNIT"/>
    <property type="match status" value="1"/>
</dbReference>
<dbReference type="Pfam" id="PF02609">
    <property type="entry name" value="Exonuc_VII_S"/>
    <property type="match status" value="1"/>
</dbReference>
<dbReference type="PIRSF" id="PIRSF006488">
    <property type="entry name" value="Exonuc_VII_S"/>
    <property type="match status" value="1"/>
</dbReference>
<dbReference type="SUPFAM" id="SSF116842">
    <property type="entry name" value="XseB-like"/>
    <property type="match status" value="1"/>
</dbReference>
<name>EX7S_SALTY</name>